<sequence length="282" mass="31364">MELKQISSNKCFGGLQKVFEHSSVELKCKMKFAIYLPPQAESAKCPALYWLSGLTCTEQNFISKSGCQQAASEHGLVVIAPDTSPRGCNIKGEDDSWDFGTGAGFFVNATEDPWNTNYRMYSYVTEELPQLINANFPVDPQRISIFGHSMGGHGALICALKNPGKYRSVSAFAPICNPVLCPWGKKAFNGYLGPDQSKWKAYDATCLVKSYSGPQIDILIDQGKDDEFLSNGQLLPDNFIAACTEKKIPVVFRLQEGYDHSYYFIATFITDHIRHHAKYLNA</sequence>
<comment type="function">
    <text evidence="1">Serine hydrolase involved in the detoxification of formaldehyde.</text>
</comment>
<comment type="catalytic activity">
    <reaction>
        <text>S-formylglutathione + H2O = formate + glutathione + H(+)</text>
        <dbReference type="Rhea" id="RHEA:14961"/>
        <dbReference type="ChEBI" id="CHEBI:15377"/>
        <dbReference type="ChEBI" id="CHEBI:15378"/>
        <dbReference type="ChEBI" id="CHEBI:15740"/>
        <dbReference type="ChEBI" id="CHEBI:57688"/>
        <dbReference type="ChEBI" id="CHEBI:57925"/>
        <dbReference type="EC" id="3.1.2.12"/>
    </reaction>
</comment>
<comment type="subunit">
    <text evidence="1">Homodimer.</text>
</comment>
<comment type="subcellular location">
    <subcellularLocation>
        <location>Cytoplasm</location>
    </subcellularLocation>
    <subcellularLocation>
        <location evidence="1">Cytoplasmic vesicle</location>
    </subcellularLocation>
</comment>
<comment type="similarity">
    <text evidence="4">Belongs to the esterase D family.</text>
</comment>
<keyword id="KW-0007">Acetylation</keyword>
<keyword id="KW-0963">Cytoplasm</keyword>
<keyword id="KW-0968">Cytoplasmic vesicle</keyword>
<keyword id="KW-0378">Hydrolase</keyword>
<keyword id="KW-1185">Reference proteome</keyword>
<keyword id="KW-0719">Serine esterase</keyword>
<proteinExistence type="evidence at transcript level"/>
<organism>
    <name type="scientific">Rattus norvegicus</name>
    <name type="common">Rat</name>
    <dbReference type="NCBI Taxonomy" id="10116"/>
    <lineage>
        <taxon>Eukaryota</taxon>
        <taxon>Metazoa</taxon>
        <taxon>Chordata</taxon>
        <taxon>Craniata</taxon>
        <taxon>Vertebrata</taxon>
        <taxon>Euteleostomi</taxon>
        <taxon>Mammalia</taxon>
        <taxon>Eutheria</taxon>
        <taxon>Euarchontoglires</taxon>
        <taxon>Glires</taxon>
        <taxon>Rodentia</taxon>
        <taxon>Myomorpha</taxon>
        <taxon>Muroidea</taxon>
        <taxon>Muridae</taxon>
        <taxon>Murinae</taxon>
        <taxon>Rattus</taxon>
    </lineage>
</organism>
<name>ESTD_RAT</name>
<gene>
    <name type="primary">Esd</name>
</gene>
<feature type="chain" id="PRO_0000341966" description="S-formylglutathione hydrolase">
    <location>
        <begin position="1"/>
        <end position="282"/>
    </location>
</feature>
<feature type="active site" description="Charge relay system" evidence="1">
    <location>
        <position position="149"/>
    </location>
</feature>
<feature type="active site" description="Charge relay system" evidence="1">
    <location>
        <position position="226"/>
    </location>
</feature>
<feature type="active site" description="Charge relay system" evidence="1">
    <location>
        <position position="260"/>
    </location>
</feature>
<feature type="modified residue" description="N6-succinyllysine" evidence="3">
    <location>
        <position position="4"/>
    </location>
</feature>
<feature type="modified residue" description="N6-acetyllysine" evidence="2">
    <location>
        <position position="200"/>
    </location>
</feature>
<evidence type="ECO:0000250" key="1"/>
<evidence type="ECO:0000250" key="2">
    <source>
        <dbReference type="UniProtKB" id="P10768"/>
    </source>
</evidence>
<evidence type="ECO:0000250" key="3">
    <source>
        <dbReference type="UniProtKB" id="Q9R0P3"/>
    </source>
</evidence>
<evidence type="ECO:0000305" key="4"/>
<reference key="1">
    <citation type="journal article" date="2004" name="Genome Res.">
        <title>The status, quality, and expansion of the NIH full-length cDNA project: the Mammalian Gene Collection (MGC).</title>
        <authorList>
            <consortium name="The MGC Project Team"/>
        </authorList>
    </citation>
    <scope>NUCLEOTIDE SEQUENCE [LARGE SCALE MRNA]</scope>
    <source>
        <tissue>Ovary</tissue>
    </source>
</reference>
<accession>B0BNE5</accession>
<protein>
    <recommendedName>
        <fullName>S-formylglutathione hydrolase</fullName>
        <shortName>FGH</shortName>
        <ecNumber>3.1.2.12</ecNumber>
    </recommendedName>
    <alternativeName>
        <fullName>Esterase D</fullName>
    </alternativeName>
</protein>
<dbReference type="EC" id="3.1.2.12"/>
<dbReference type="EMBL" id="BC158790">
    <property type="protein sequence ID" value="AAI58791.1"/>
    <property type="molecule type" value="mRNA"/>
</dbReference>
<dbReference type="RefSeq" id="NP_001099521.1">
    <property type="nucleotide sequence ID" value="NM_001106051.3"/>
</dbReference>
<dbReference type="RefSeq" id="NP_001257794.1">
    <property type="nucleotide sequence ID" value="NM_001270865.1"/>
</dbReference>
<dbReference type="RefSeq" id="NP_001257795.1">
    <property type="nucleotide sequence ID" value="NM_001270866.1"/>
</dbReference>
<dbReference type="RefSeq" id="XP_063130235.1">
    <property type="nucleotide sequence ID" value="XM_063274165.1"/>
</dbReference>
<dbReference type="SMR" id="B0BNE5"/>
<dbReference type="BioGRID" id="253188">
    <property type="interactions" value="1"/>
</dbReference>
<dbReference type="FunCoup" id="B0BNE5">
    <property type="interactions" value="2471"/>
</dbReference>
<dbReference type="STRING" id="10116.ENSRNOP00000013324"/>
<dbReference type="ESTHER" id="rat-estd">
    <property type="family name" value="A85-EsteraseD-FGH"/>
</dbReference>
<dbReference type="iPTMnet" id="B0BNE5"/>
<dbReference type="PhosphoSitePlus" id="B0BNE5"/>
<dbReference type="jPOST" id="B0BNE5"/>
<dbReference type="PaxDb" id="10116-ENSRNOP00000013324"/>
<dbReference type="PeptideAtlas" id="B0BNE5"/>
<dbReference type="Ensembl" id="ENSRNOT00000078013.2">
    <property type="protein sequence ID" value="ENSRNOP00000068608.1"/>
    <property type="gene ID" value="ENSRNOG00000009512.7"/>
</dbReference>
<dbReference type="GeneID" id="290401"/>
<dbReference type="KEGG" id="rno:290401"/>
<dbReference type="UCSC" id="RGD:1592114">
    <property type="organism name" value="rat"/>
</dbReference>
<dbReference type="AGR" id="RGD:1592114"/>
<dbReference type="CTD" id="2098"/>
<dbReference type="RGD" id="1592114">
    <property type="gene designation" value="Esd"/>
</dbReference>
<dbReference type="eggNOG" id="KOG3101">
    <property type="taxonomic scope" value="Eukaryota"/>
</dbReference>
<dbReference type="GeneTree" id="ENSGT00390000011864"/>
<dbReference type="HOGENOM" id="CLU_056472_0_0_1"/>
<dbReference type="InParanoid" id="B0BNE5"/>
<dbReference type="OMA" id="PSDCPWG"/>
<dbReference type="OrthoDB" id="1032at9989"/>
<dbReference type="PhylomeDB" id="B0BNE5"/>
<dbReference type="TreeFam" id="TF300793"/>
<dbReference type="Reactome" id="R-RNO-156590">
    <property type="pathway name" value="Glutathione conjugation"/>
</dbReference>
<dbReference type="PRO" id="PR:B0BNE5"/>
<dbReference type="Proteomes" id="UP000002494">
    <property type="component" value="Chromosome 15"/>
</dbReference>
<dbReference type="Bgee" id="ENSRNOG00000009512">
    <property type="expression patterns" value="Expressed in kidney and 20 other cell types or tissues"/>
</dbReference>
<dbReference type="GO" id="GO:0031410">
    <property type="term" value="C:cytoplasmic vesicle"/>
    <property type="evidence" value="ECO:0007669"/>
    <property type="project" value="UniProtKB-KW"/>
</dbReference>
<dbReference type="GO" id="GO:0005829">
    <property type="term" value="C:cytosol"/>
    <property type="evidence" value="ECO:0000318"/>
    <property type="project" value="GO_Central"/>
</dbReference>
<dbReference type="GO" id="GO:0052689">
    <property type="term" value="F:carboxylic ester hydrolase activity"/>
    <property type="evidence" value="ECO:0007669"/>
    <property type="project" value="UniProtKB-KW"/>
</dbReference>
<dbReference type="GO" id="GO:0016788">
    <property type="term" value="F:hydrolase activity, acting on ester bonds"/>
    <property type="evidence" value="ECO:0000266"/>
    <property type="project" value="RGD"/>
</dbReference>
<dbReference type="GO" id="GO:0042802">
    <property type="term" value="F:identical protein binding"/>
    <property type="evidence" value="ECO:0000266"/>
    <property type="project" value="RGD"/>
</dbReference>
<dbReference type="GO" id="GO:0018738">
    <property type="term" value="F:S-formylglutathione hydrolase activity"/>
    <property type="evidence" value="ECO:0000318"/>
    <property type="project" value="GO_Central"/>
</dbReference>
<dbReference type="GO" id="GO:0046294">
    <property type="term" value="P:formaldehyde catabolic process"/>
    <property type="evidence" value="ECO:0007669"/>
    <property type="project" value="InterPro"/>
</dbReference>
<dbReference type="FunFam" id="3.40.50.1820:FF:000002">
    <property type="entry name" value="S-formylglutathione hydrolase"/>
    <property type="match status" value="1"/>
</dbReference>
<dbReference type="Gene3D" id="3.40.50.1820">
    <property type="entry name" value="alpha/beta hydrolase"/>
    <property type="match status" value="1"/>
</dbReference>
<dbReference type="InterPro" id="IPR029058">
    <property type="entry name" value="AB_hydrolase_fold"/>
</dbReference>
<dbReference type="InterPro" id="IPR000801">
    <property type="entry name" value="Esterase-like"/>
</dbReference>
<dbReference type="InterPro" id="IPR014186">
    <property type="entry name" value="S-formylglutathione_hydrol"/>
</dbReference>
<dbReference type="NCBIfam" id="TIGR02821">
    <property type="entry name" value="fghA_ester_D"/>
    <property type="match status" value="1"/>
</dbReference>
<dbReference type="PANTHER" id="PTHR10061">
    <property type="entry name" value="S-FORMYLGLUTATHIONE HYDROLASE"/>
    <property type="match status" value="1"/>
</dbReference>
<dbReference type="PANTHER" id="PTHR10061:SF0">
    <property type="entry name" value="S-FORMYLGLUTATHIONE HYDROLASE"/>
    <property type="match status" value="1"/>
</dbReference>
<dbReference type="Pfam" id="PF00756">
    <property type="entry name" value="Esterase"/>
    <property type="match status" value="1"/>
</dbReference>
<dbReference type="SUPFAM" id="SSF53474">
    <property type="entry name" value="alpha/beta-Hydrolases"/>
    <property type="match status" value="1"/>
</dbReference>